<comment type="function">
    <text evidence="3">Functions as a GTPase-activating protein for the small GTPases RHOA, RHOB, RHOC and CDC42, terminating their downstream signaling. This induces morphological changes and detachment through cytoskeletal reorganization, playing a critical role in biological processes such as cell migration and proliferation. Also functions in vivo as an activator of the phospholipase PLCD1. Active DLC1 increases cell migration velocity but reduces directionality (By similarity). Required for growth factor-induced epithelial cell migration; in resting cells, interacts with TNS3 while PTEN interacts with the p85 regulatory subunit of the PI3K kinase complex but growth factor stimulation induces phosphorylation of TNS3 and PTEN, causing them to change their binding preference so that PTEN interacts with DLC1 and TNS3 interacts with p85 (By similarity). The PTEN-DLC1 complex translocates to the posterior of migrating cells to activate RHOA while the TNS3-p85 complex translocates to the leading edge of migrating cells to promote RAC1 activation (By similarity).</text>
</comment>
<comment type="subunit">
    <text evidence="3">Interacts with EF1A1, facilitates EF1A1 distribution to the membrane periphery and ruffles upon growth factor stimulation and suppresses cell migration. Interacts with tensin TNS1 (via N-terminus); the interaction is decreased by phosphorylation of TNS1. Interacts with TNS3 and PTEN; in resting cells, interacts with TNS3 (via C2 tensin-type domain) but, following growth factor stimulation, TNS3 and PTEN are phosphorylated which leads to weakened interaction with TNS3 and enhanced interaction with PTEN. Interacts (via C-terminus) with tensin TNS4 (via SH2 domain); the interaction is independent of tyrosine phosphorylation of DLC1.</text>
</comment>
<comment type="subcellular location">
    <subcellularLocation>
        <location evidence="1">Cytoplasm</location>
    </subcellularLocation>
    <subcellularLocation>
        <location evidence="3">Cell junction</location>
        <location evidence="3">Focal adhesion</location>
    </subcellularLocation>
    <subcellularLocation>
        <location evidence="1">Membrane</location>
        <topology evidence="1">Peripheral membrane protein</topology>
    </subcellularLocation>
    <text evidence="1">Colocalizes with EF1A1 at actin-rich regions in the cell periphery.</text>
</comment>
<comment type="alternative products">
    <event type="alternative splicing"/>
    <isoform>
        <id>Q9R0Z9-1</id>
        <name>1</name>
        <sequence type="displayed"/>
    </isoform>
    <isoform>
        <id>Q9R0Z9-2</id>
        <name>2</name>
        <sequence type="described" ref="VSP_026144"/>
    </isoform>
</comment>
<comment type="tissue specificity">
    <text>Widely expressed with the highest levels in heart, liver and lung.</text>
</comment>
<comment type="domain">
    <text evidence="1">The SAM domain mediates interaction with EF1A1, and functions as an autoinhibitory regulator of RhoGAP Activity.</text>
</comment>
<comment type="domain">
    <text evidence="1">The polybasic cluster is required for activation and mediates binding to phosphatidylinositol-4,5-bisphosphate (PI(4,5)P(2)) containing membranes.</text>
</comment>
<comment type="sequence caution" evidence="8">
    <conflict type="erroneous initiation">
        <sequence resource="EMBL-CDS" id="AAL87620"/>
    </conflict>
</comment>
<name>RHG07_MOUSE</name>
<reference key="1">
    <citation type="journal article" date="1999" name="Cytogenet. Cell Genet.">
        <title>Assignment and cloning of mouse Arhgap7 to chromosome 8A4-B2, a conserved syntenic region of human chromosome 8p22-p21.</title>
        <authorList>
            <person name="Yuan B.-Z."/>
            <person name="Keck-Waggoner C.L."/>
            <person name="Zimonjic D.B."/>
            <person name="Thorgeirsson S.S."/>
            <person name="Popescu N.C."/>
        </authorList>
    </citation>
    <scope>NUCLEOTIDE SEQUENCE [MRNA] (ISOFORM 1)</scope>
    <source>
        <strain>129/Sv</strain>
    </source>
</reference>
<reference key="2">
    <citation type="journal article" date="2002" name="Gene">
        <title>Gene structure, tissue expression, and linkage mapping of the mouse DLC-1 gene (Arhgap7).</title>
        <authorList>
            <person name="Durkin M.E."/>
            <person name="Yuan B.-Z."/>
            <person name="Thorgeirsson S.S."/>
            <person name="Popescu N.C."/>
        </authorList>
    </citation>
    <scope>NUCLEOTIDE SEQUENCE [GENOMIC DNA] (ISOFORM 1)</scope>
    <source>
        <strain>129/Sv</strain>
    </source>
</reference>
<reference key="3">
    <citation type="journal article" date="2005" name="Science">
        <title>The transcriptional landscape of the mammalian genome.</title>
        <authorList>
            <person name="Carninci P."/>
            <person name="Kasukawa T."/>
            <person name="Katayama S."/>
            <person name="Gough J."/>
            <person name="Frith M.C."/>
            <person name="Maeda N."/>
            <person name="Oyama R."/>
            <person name="Ravasi T."/>
            <person name="Lenhard B."/>
            <person name="Wells C."/>
            <person name="Kodzius R."/>
            <person name="Shimokawa K."/>
            <person name="Bajic V.B."/>
            <person name="Brenner S.E."/>
            <person name="Batalov S."/>
            <person name="Forrest A.R."/>
            <person name="Zavolan M."/>
            <person name="Davis M.J."/>
            <person name="Wilming L.G."/>
            <person name="Aidinis V."/>
            <person name="Allen J.E."/>
            <person name="Ambesi-Impiombato A."/>
            <person name="Apweiler R."/>
            <person name="Aturaliya R.N."/>
            <person name="Bailey T.L."/>
            <person name="Bansal M."/>
            <person name="Baxter L."/>
            <person name="Beisel K.W."/>
            <person name="Bersano T."/>
            <person name="Bono H."/>
            <person name="Chalk A.M."/>
            <person name="Chiu K.P."/>
            <person name="Choudhary V."/>
            <person name="Christoffels A."/>
            <person name="Clutterbuck D.R."/>
            <person name="Crowe M.L."/>
            <person name="Dalla E."/>
            <person name="Dalrymple B.P."/>
            <person name="de Bono B."/>
            <person name="Della Gatta G."/>
            <person name="di Bernardo D."/>
            <person name="Down T."/>
            <person name="Engstrom P."/>
            <person name="Fagiolini M."/>
            <person name="Faulkner G."/>
            <person name="Fletcher C.F."/>
            <person name="Fukushima T."/>
            <person name="Furuno M."/>
            <person name="Futaki S."/>
            <person name="Gariboldi M."/>
            <person name="Georgii-Hemming P."/>
            <person name="Gingeras T.R."/>
            <person name="Gojobori T."/>
            <person name="Green R.E."/>
            <person name="Gustincich S."/>
            <person name="Harbers M."/>
            <person name="Hayashi Y."/>
            <person name="Hensch T.K."/>
            <person name="Hirokawa N."/>
            <person name="Hill D."/>
            <person name="Huminiecki L."/>
            <person name="Iacono M."/>
            <person name="Ikeo K."/>
            <person name="Iwama A."/>
            <person name="Ishikawa T."/>
            <person name="Jakt M."/>
            <person name="Kanapin A."/>
            <person name="Katoh M."/>
            <person name="Kawasawa Y."/>
            <person name="Kelso J."/>
            <person name="Kitamura H."/>
            <person name="Kitano H."/>
            <person name="Kollias G."/>
            <person name="Krishnan S.P."/>
            <person name="Kruger A."/>
            <person name="Kummerfeld S.K."/>
            <person name="Kurochkin I.V."/>
            <person name="Lareau L.F."/>
            <person name="Lazarevic D."/>
            <person name="Lipovich L."/>
            <person name="Liu J."/>
            <person name="Liuni S."/>
            <person name="McWilliam S."/>
            <person name="Madan Babu M."/>
            <person name="Madera M."/>
            <person name="Marchionni L."/>
            <person name="Matsuda H."/>
            <person name="Matsuzawa S."/>
            <person name="Miki H."/>
            <person name="Mignone F."/>
            <person name="Miyake S."/>
            <person name="Morris K."/>
            <person name="Mottagui-Tabar S."/>
            <person name="Mulder N."/>
            <person name="Nakano N."/>
            <person name="Nakauchi H."/>
            <person name="Ng P."/>
            <person name="Nilsson R."/>
            <person name="Nishiguchi S."/>
            <person name="Nishikawa S."/>
            <person name="Nori F."/>
            <person name="Ohara O."/>
            <person name="Okazaki Y."/>
            <person name="Orlando V."/>
            <person name="Pang K.C."/>
            <person name="Pavan W.J."/>
            <person name="Pavesi G."/>
            <person name="Pesole G."/>
            <person name="Petrovsky N."/>
            <person name="Piazza S."/>
            <person name="Reed J."/>
            <person name="Reid J.F."/>
            <person name="Ring B.Z."/>
            <person name="Ringwald M."/>
            <person name="Rost B."/>
            <person name="Ruan Y."/>
            <person name="Salzberg S.L."/>
            <person name="Sandelin A."/>
            <person name="Schneider C."/>
            <person name="Schoenbach C."/>
            <person name="Sekiguchi K."/>
            <person name="Semple C.A."/>
            <person name="Seno S."/>
            <person name="Sessa L."/>
            <person name="Sheng Y."/>
            <person name="Shibata Y."/>
            <person name="Shimada H."/>
            <person name="Shimada K."/>
            <person name="Silva D."/>
            <person name="Sinclair B."/>
            <person name="Sperling S."/>
            <person name="Stupka E."/>
            <person name="Sugiura K."/>
            <person name="Sultana R."/>
            <person name="Takenaka Y."/>
            <person name="Taki K."/>
            <person name="Tammoja K."/>
            <person name="Tan S.L."/>
            <person name="Tang S."/>
            <person name="Taylor M.S."/>
            <person name="Tegner J."/>
            <person name="Teichmann S.A."/>
            <person name="Ueda H.R."/>
            <person name="van Nimwegen E."/>
            <person name="Verardo R."/>
            <person name="Wei C.L."/>
            <person name="Yagi K."/>
            <person name="Yamanishi H."/>
            <person name="Zabarovsky E."/>
            <person name="Zhu S."/>
            <person name="Zimmer A."/>
            <person name="Hide W."/>
            <person name="Bult C."/>
            <person name="Grimmond S.M."/>
            <person name="Teasdale R.D."/>
            <person name="Liu E.T."/>
            <person name="Brusic V."/>
            <person name="Quackenbush J."/>
            <person name="Wahlestedt C."/>
            <person name="Mattick J.S."/>
            <person name="Hume D.A."/>
            <person name="Kai C."/>
            <person name="Sasaki D."/>
            <person name="Tomaru Y."/>
            <person name="Fukuda S."/>
            <person name="Kanamori-Katayama M."/>
            <person name="Suzuki M."/>
            <person name="Aoki J."/>
            <person name="Arakawa T."/>
            <person name="Iida J."/>
            <person name="Imamura K."/>
            <person name="Itoh M."/>
            <person name="Kato T."/>
            <person name="Kawaji H."/>
            <person name="Kawagashira N."/>
            <person name="Kawashima T."/>
            <person name="Kojima M."/>
            <person name="Kondo S."/>
            <person name="Konno H."/>
            <person name="Nakano K."/>
            <person name="Ninomiya N."/>
            <person name="Nishio T."/>
            <person name="Okada M."/>
            <person name="Plessy C."/>
            <person name="Shibata K."/>
            <person name="Shiraki T."/>
            <person name="Suzuki S."/>
            <person name="Tagami M."/>
            <person name="Waki K."/>
            <person name="Watahiki A."/>
            <person name="Okamura-Oho Y."/>
            <person name="Suzuki H."/>
            <person name="Kawai J."/>
            <person name="Hayashizaki Y."/>
        </authorList>
    </citation>
    <scope>NUCLEOTIDE SEQUENCE [LARGE SCALE MRNA] (ISOFORM 2)</scope>
    <scope>NUCLEOTIDE SEQUENCE [LARGE SCALE MRNA] OF 1-1064 (ISOFORM 1)</scope>
    <source>
        <strain>C57BL/6J</strain>
        <tissue>Brain</tissue>
        <tissue>Diencephalon</tissue>
    </source>
</reference>
<reference key="4">
    <citation type="journal article" date="2007" name="Proc. Natl. Acad. Sci. U.S.A.">
        <title>Large-scale phosphorylation analysis of mouse liver.</title>
        <authorList>
            <person name="Villen J."/>
            <person name="Beausoleil S.A."/>
            <person name="Gerber S.A."/>
            <person name="Gygi S.P."/>
        </authorList>
    </citation>
    <scope>PHOSPHORYLATION [LARGE SCALE ANALYSIS] AT SER-86 AND SER-89</scope>
    <scope>IDENTIFICATION BY MASS SPECTROMETRY [LARGE SCALE ANALYSIS]</scope>
    <source>
        <tissue>Liver</tissue>
    </source>
</reference>
<reference key="5">
    <citation type="journal article" date="2010" name="Cell">
        <title>A tissue-specific atlas of mouse protein phosphorylation and expression.</title>
        <authorList>
            <person name="Huttlin E.L."/>
            <person name="Jedrychowski M.P."/>
            <person name="Elias J.E."/>
            <person name="Goswami T."/>
            <person name="Rad R."/>
            <person name="Beausoleil S.A."/>
            <person name="Villen J."/>
            <person name="Haas W."/>
            <person name="Sowa M.E."/>
            <person name="Gygi S.P."/>
        </authorList>
    </citation>
    <scope>PHOSPHORYLATION [LARGE SCALE ANALYSIS] AT SER-86 AND SER-89</scope>
    <scope>IDENTIFICATION BY MASS SPECTROMETRY [LARGE SCALE ANALYSIS]</scope>
    <source>
        <tissue>Brain</tissue>
        <tissue>Brown adipose tissue</tissue>
        <tissue>Heart</tissue>
        <tissue>Kidney</tissue>
        <tissue>Liver</tissue>
        <tissue>Lung</tissue>
        <tissue>Testis</tissue>
    </source>
</reference>
<protein>
    <recommendedName>
        <fullName>Rho GTPase-activating protein 7</fullName>
    </recommendedName>
    <alternativeName>
        <fullName>Deleted in liver cancer 1 protein homolog</fullName>
        <shortName>DLC-1</shortName>
    </alternativeName>
    <alternativeName>
        <fullName>Rho-type GTPase-activating protein 7</fullName>
    </alternativeName>
    <alternativeName>
        <fullName>START domain-containing protein 12</fullName>
        <shortName>StARD12</shortName>
    </alternativeName>
    <alternativeName>
        <fullName>StAR-related lipid transfer protein 12</fullName>
    </alternativeName>
</protein>
<feature type="chain" id="PRO_0000056708" description="Rho GTPase-activating protein 7">
    <location>
        <begin position="1"/>
        <end position="1092"/>
    </location>
</feature>
<feature type="domain" description="SAM">
    <location>
        <begin position="11"/>
        <end position="78"/>
    </location>
</feature>
<feature type="domain" description="Rho-GAP" evidence="4">
    <location>
        <begin position="642"/>
        <end position="848"/>
    </location>
</feature>
<feature type="domain" description="START" evidence="5">
    <location>
        <begin position="878"/>
        <end position="1085"/>
    </location>
</feature>
<feature type="region of interest" description="Disordered" evidence="6">
    <location>
        <begin position="121"/>
        <end position="179"/>
    </location>
</feature>
<feature type="region of interest" description="Focal adhesion-targeting (FAT)" evidence="1">
    <location>
        <begin position="275"/>
        <end position="448"/>
    </location>
</feature>
<feature type="region of interest" description="Disordered" evidence="6">
    <location>
        <begin position="297"/>
        <end position="330"/>
    </location>
</feature>
<feature type="region of interest" description="Disordered" evidence="6">
    <location>
        <begin position="409"/>
        <end position="434"/>
    </location>
</feature>
<feature type="region of interest" description="Disordered" evidence="6">
    <location>
        <begin position="492"/>
        <end position="553"/>
    </location>
</feature>
<feature type="region of interest" description="Polybasic cluster (PBR)" evidence="1">
    <location>
        <begin position="615"/>
        <end position="637"/>
    </location>
</feature>
<feature type="compositionally biased region" description="Polar residues" evidence="6">
    <location>
        <begin position="130"/>
        <end position="143"/>
    </location>
</feature>
<feature type="compositionally biased region" description="Low complexity" evidence="6">
    <location>
        <begin position="154"/>
        <end position="174"/>
    </location>
</feature>
<feature type="compositionally biased region" description="Low complexity" evidence="6">
    <location>
        <begin position="299"/>
        <end position="325"/>
    </location>
</feature>
<feature type="compositionally biased region" description="Basic and acidic residues" evidence="6">
    <location>
        <begin position="415"/>
        <end position="426"/>
    </location>
</feature>
<feature type="compositionally biased region" description="Polar residues" evidence="6">
    <location>
        <begin position="500"/>
        <end position="512"/>
    </location>
</feature>
<feature type="compositionally biased region" description="Basic and acidic residues" evidence="6">
    <location>
        <begin position="514"/>
        <end position="526"/>
    </location>
</feature>
<feature type="compositionally biased region" description="Polar residues" evidence="6">
    <location>
        <begin position="527"/>
        <end position="536"/>
    </location>
</feature>
<feature type="site" description="Arginine finger; crucial for GTP hydrolysis by stabilizing the transition state" evidence="4">
    <location>
        <position position="678"/>
    </location>
</feature>
<feature type="modified residue" description="Phosphoserine" evidence="9 10">
    <location>
        <position position="86"/>
    </location>
</feature>
<feature type="modified residue" description="Phosphoserine" evidence="9 10">
    <location>
        <position position="89"/>
    </location>
</feature>
<feature type="modified residue" description="Phosphoserine" evidence="2">
    <location>
        <position position="129"/>
    </location>
</feature>
<feature type="modified residue" description="Phosphoserine" evidence="3">
    <location>
        <position position="322"/>
    </location>
</feature>
<feature type="splice variant" id="VSP_026144" description="In isoform 2." evidence="7">
    <original>MCRDEPDTMILTQ</original>
    <variation>MGDPEGHVMARPLRGPLRRSFSDHIRDSTARALDAIWKNTRERRLAE</variation>
    <location>
        <begin position="1"/>
        <end position="13"/>
    </location>
</feature>
<feature type="sequence conflict" description="In Ref. 3; BAE36903/BAE27982." evidence="8" ref="3">
    <original>V</original>
    <variation>I</variation>
    <location>
        <position position="42"/>
    </location>
</feature>
<feature type="sequence conflict" description="In Ref. 3; BAE36903/BAE27982." evidence="8" ref="3">
    <original>F</original>
    <variation>S</variation>
    <location>
        <position position="120"/>
    </location>
</feature>
<feature type="sequence conflict" description="In Ref. 1; AAD51760." evidence="8" ref="1">
    <original>G</original>
    <variation>R</variation>
    <location>
        <position position="192"/>
    </location>
</feature>
<feature type="sequence conflict" description="In Ref. 1; AAD51760." evidence="8" ref="1">
    <original>HD</original>
    <variation>SH</variation>
    <location>
        <begin position="421"/>
        <end position="422"/>
    </location>
</feature>
<feature type="sequence conflict" description="In Ref. 1; AAD51760." evidence="8" ref="1">
    <original>KQY</original>
    <variation>NRN</variation>
    <location>
        <begin position="715"/>
        <end position="717"/>
    </location>
</feature>
<feature type="sequence conflict" description="In Ref. 1; AAD51760." evidence="8" ref="1">
    <original>LSETFL</original>
    <variation>FSEPSM</variation>
    <location>
        <begin position="730"/>
        <end position="735"/>
    </location>
</feature>
<feature type="sequence conflict" description="In Ref. 3; BAE36903/BAE27982." evidence="8" ref="3">
    <original>D</original>
    <variation>E</variation>
    <location>
        <position position="917"/>
    </location>
</feature>
<accession>Q9R0Z9</accession>
<accession>Q3TRX3</accession>
<accession>Q3UH75</accession>
<accession>Q8R541</accession>
<dbReference type="EMBL" id="AF178078">
    <property type="protein sequence ID" value="AAD51760.1"/>
    <property type="molecule type" value="mRNA"/>
</dbReference>
<dbReference type="EMBL" id="AF411442">
    <property type="protein sequence ID" value="AAL87620.1"/>
    <property type="status" value="ALT_INIT"/>
    <property type="molecule type" value="Genomic_DNA"/>
</dbReference>
<dbReference type="EMBL" id="AF411435">
    <property type="protein sequence ID" value="AAL87620.1"/>
    <property type="status" value="JOINED"/>
    <property type="molecule type" value="Genomic_DNA"/>
</dbReference>
<dbReference type="EMBL" id="AF411436">
    <property type="protein sequence ID" value="AAL87620.1"/>
    <property type="status" value="JOINED"/>
    <property type="molecule type" value="Genomic_DNA"/>
</dbReference>
<dbReference type="EMBL" id="AF411437">
    <property type="protein sequence ID" value="AAL87620.1"/>
    <property type="status" value="JOINED"/>
    <property type="molecule type" value="Genomic_DNA"/>
</dbReference>
<dbReference type="EMBL" id="AF411438">
    <property type="protein sequence ID" value="AAL87620.1"/>
    <property type="status" value="JOINED"/>
    <property type="molecule type" value="Genomic_DNA"/>
</dbReference>
<dbReference type="EMBL" id="AF411439">
    <property type="protein sequence ID" value="AAL87620.1"/>
    <property type="status" value="JOINED"/>
    <property type="molecule type" value="Genomic_DNA"/>
</dbReference>
<dbReference type="EMBL" id="AF411440">
    <property type="protein sequence ID" value="AAL87620.1"/>
    <property type="status" value="JOINED"/>
    <property type="molecule type" value="Genomic_DNA"/>
</dbReference>
<dbReference type="EMBL" id="AF411441">
    <property type="protein sequence ID" value="AAL87620.1"/>
    <property type="status" value="JOINED"/>
    <property type="molecule type" value="Genomic_DNA"/>
</dbReference>
<dbReference type="EMBL" id="AK147539">
    <property type="protein sequence ID" value="BAE27982.1"/>
    <property type="molecule type" value="mRNA"/>
</dbReference>
<dbReference type="EMBL" id="AK162413">
    <property type="protein sequence ID" value="BAE36903.1"/>
    <property type="molecule type" value="mRNA"/>
</dbReference>
<dbReference type="CCDS" id="CCDS40322.1">
    <molecule id="Q9R0Z9-1"/>
</dbReference>
<dbReference type="CCDS" id="CCDS57616.1">
    <molecule id="Q9R0Z9-2"/>
</dbReference>
<dbReference type="RefSeq" id="NP_001181870.1">
    <property type="nucleotide sequence ID" value="NM_001194941.1"/>
</dbReference>
<dbReference type="RefSeq" id="NP_056617.2">
    <property type="nucleotide sequence ID" value="NM_015802.3"/>
</dbReference>
<dbReference type="SMR" id="Q9R0Z9"/>
<dbReference type="BioGRID" id="206100">
    <property type="interactions" value="1"/>
</dbReference>
<dbReference type="FunCoup" id="Q9R0Z9">
    <property type="interactions" value="608"/>
</dbReference>
<dbReference type="IntAct" id="Q9R0Z9">
    <property type="interactions" value="1"/>
</dbReference>
<dbReference type="STRING" id="10090.ENSMUSP00000132812"/>
<dbReference type="GlyGen" id="Q9R0Z9">
    <property type="glycosylation" value="5 sites, 1 N-linked glycan (1 site), 1 O-linked glycan (3 sites)"/>
</dbReference>
<dbReference type="iPTMnet" id="Q9R0Z9"/>
<dbReference type="PhosphoSitePlus" id="Q9R0Z9"/>
<dbReference type="jPOST" id="Q9R0Z9"/>
<dbReference type="PaxDb" id="10090-ENSMUSP00000033923"/>
<dbReference type="ProteomicsDB" id="253275">
    <molecule id="Q9R0Z9-1"/>
</dbReference>
<dbReference type="ProteomicsDB" id="253276">
    <molecule id="Q9R0Z9-2"/>
</dbReference>
<dbReference type="GeneID" id="50768"/>
<dbReference type="KEGG" id="mmu:50768"/>
<dbReference type="AGR" id="MGI:1354949"/>
<dbReference type="CTD" id="10395"/>
<dbReference type="MGI" id="MGI:1354949">
    <property type="gene designation" value="Dlc1"/>
</dbReference>
<dbReference type="eggNOG" id="KOG2200">
    <property type="taxonomic scope" value="Eukaryota"/>
</dbReference>
<dbReference type="InParanoid" id="Q9R0Z9"/>
<dbReference type="OrthoDB" id="10003330at2759"/>
<dbReference type="PhylomeDB" id="Q9R0Z9"/>
<dbReference type="Reactome" id="R-MMU-8980692">
    <property type="pathway name" value="RHOA GTPase cycle"/>
</dbReference>
<dbReference type="Reactome" id="R-MMU-9013026">
    <property type="pathway name" value="RHOB GTPase cycle"/>
</dbReference>
<dbReference type="Reactome" id="R-MMU-9013106">
    <property type="pathway name" value="RHOC GTPase cycle"/>
</dbReference>
<dbReference type="Reactome" id="R-MMU-9013148">
    <property type="pathway name" value="CDC42 GTPase cycle"/>
</dbReference>
<dbReference type="Reactome" id="R-MMU-9013149">
    <property type="pathway name" value="RAC1 GTPase cycle"/>
</dbReference>
<dbReference type="Reactome" id="R-MMU-9013406">
    <property type="pathway name" value="RHOQ GTPase cycle"/>
</dbReference>
<dbReference type="BioGRID-ORCS" id="50768">
    <property type="hits" value="0 hits in 79 CRISPR screens"/>
</dbReference>
<dbReference type="ChiTaRS" id="Dlc1">
    <property type="organism name" value="mouse"/>
</dbReference>
<dbReference type="PRO" id="PR:Q9R0Z9"/>
<dbReference type="Proteomes" id="UP000000589">
    <property type="component" value="Unplaced"/>
</dbReference>
<dbReference type="RNAct" id="Q9R0Z9">
    <property type="molecule type" value="protein"/>
</dbReference>
<dbReference type="GO" id="GO:0005737">
    <property type="term" value="C:cytoplasm"/>
    <property type="evidence" value="ECO:0007669"/>
    <property type="project" value="UniProtKB-SubCell"/>
</dbReference>
<dbReference type="GO" id="GO:0005925">
    <property type="term" value="C:focal adhesion"/>
    <property type="evidence" value="ECO:0007669"/>
    <property type="project" value="UniProtKB-SubCell"/>
</dbReference>
<dbReference type="GO" id="GO:0016020">
    <property type="term" value="C:membrane"/>
    <property type="evidence" value="ECO:0007669"/>
    <property type="project" value="UniProtKB-SubCell"/>
</dbReference>
<dbReference type="GO" id="GO:0005096">
    <property type="term" value="F:GTPase activator activity"/>
    <property type="evidence" value="ECO:0007669"/>
    <property type="project" value="UniProtKB-KW"/>
</dbReference>
<dbReference type="GO" id="GO:0008289">
    <property type="term" value="F:lipid binding"/>
    <property type="evidence" value="ECO:0007669"/>
    <property type="project" value="InterPro"/>
</dbReference>
<dbReference type="GO" id="GO:0030036">
    <property type="term" value="P:actin cytoskeleton organization"/>
    <property type="evidence" value="ECO:0000315"/>
    <property type="project" value="MGI"/>
</dbReference>
<dbReference type="GO" id="GO:0048041">
    <property type="term" value="P:focal adhesion assembly"/>
    <property type="evidence" value="ECO:0000315"/>
    <property type="project" value="MGI"/>
</dbReference>
<dbReference type="GO" id="GO:0030900">
    <property type="term" value="P:forebrain development"/>
    <property type="evidence" value="ECO:0000315"/>
    <property type="project" value="MGI"/>
</dbReference>
<dbReference type="GO" id="GO:0003007">
    <property type="term" value="P:heart morphogenesis"/>
    <property type="evidence" value="ECO:0000315"/>
    <property type="project" value="MGI"/>
</dbReference>
<dbReference type="GO" id="GO:0021575">
    <property type="term" value="P:hindbrain morphogenesis"/>
    <property type="evidence" value="ECO:0000315"/>
    <property type="project" value="MGI"/>
</dbReference>
<dbReference type="GO" id="GO:0008285">
    <property type="term" value="P:negative regulation of cell population proliferation"/>
    <property type="evidence" value="ECO:0000250"/>
    <property type="project" value="UniProtKB"/>
</dbReference>
<dbReference type="GO" id="GO:0001843">
    <property type="term" value="P:neural tube closure"/>
    <property type="evidence" value="ECO:0000315"/>
    <property type="project" value="MGI"/>
</dbReference>
<dbReference type="GO" id="GO:0007165">
    <property type="term" value="P:signal transduction"/>
    <property type="evidence" value="ECO:0007669"/>
    <property type="project" value="InterPro"/>
</dbReference>
<dbReference type="CDD" id="cd04375">
    <property type="entry name" value="RhoGAP_DLC1"/>
    <property type="match status" value="1"/>
</dbReference>
<dbReference type="CDD" id="cd09591">
    <property type="entry name" value="SAM_DLC1"/>
    <property type="match status" value="1"/>
</dbReference>
<dbReference type="FunFam" id="3.30.530.20:FF:000010">
    <property type="entry name" value="rho GTPase-activating protein 7 isoform X1"/>
    <property type="match status" value="1"/>
</dbReference>
<dbReference type="FunFam" id="1.10.555.10:FF:000007">
    <property type="entry name" value="rho GTPase-activating protein 7 isoform X2"/>
    <property type="match status" value="1"/>
</dbReference>
<dbReference type="FunFam" id="1.10.287.2070:FF:000001">
    <property type="entry name" value="StAR-related lipid transfer domain-containing 13"/>
    <property type="match status" value="1"/>
</dbReference>
<dbReference type="Gene3D" id="1.10.287.2070">
    <property type="match status" value="1"/>
</dbReference>
<dbReference type="Gene3D" id="3.30.530.20">
    <property type="match status" value="1"/>
</dbReference>
<dbReference type="Gene3D" id="1.10.555.10">
    <property type="entry name" value="Rho GTPase activation protein"/>
    <property type="match status" value="1"/>
</dbReference>
<dbReference type="InterPro" id="IPR008936">
    <property type="entry name" value="Rho_GTPase_activation_prot"/>
</dbReference>
<dbReference type="InterPro" id="IPR000198">
    <property type="entry name" value="RhoGAP_dom"/>
</dbReference>
<dbReference type="InterPro" id="IPR001660">
    <property type="entry name" value="SAM"/>
</dbReference>
<dbReference type="InterPro" id="IPR013761">
    <property type="entry name" value="SAM/pointed_sf"/>
</dbReference>
<dbReference type="InterPro" id="IPR023393">
    <property type="entry name" value="START-like_dom_sf"/>
</dbReference>
<dbReference type="InterPro" id="IPR002913">
    <property type="entry name" value="START_lipid-bd_dom"/>
</dbReference>
<dbReference type="PANTHER" id="PTHR12659:SF2">
    <property type="entry name" value="RHO GTPASE-ACTIVATING PROTEIN 7"/>
    <property type="match status" value="1"/>
</dbReference>
<dbReference type="PANTHER" id="PTHR12659">
    <property type="entry name" value="RHO-TYPE GTPASE ACTIVATING PROTEIN"/>
    <property type="match status" value="1"/>
</dbReference>
<dbReference type="Pfam" id="PF00620">
    <property type="entry name" value="RhoGAP"/>
    <property type="match status" value="1"/>
</dbReference>
<dbReference type="Pfam" id="PF07647">
    <property type="entry name" value="SAM_2"/>
    <property type="match status" value="1"/>
</dbReference>
<dbReference type="Pfam" id="PF01852">
    <property type="entry name" value="START"/>
    <property type="match status" value="1"/>
</dbReference>
<dbReference type="SMART" id="SM00324">
    <property type="entry name" value="RhoGAP"/>
    <property type="match status" value="1"/>
</dbReference>
<dbReference type="SMART" id="SM00234">
    <property type="entry name" value="START"/>
    <property type="match status" value="1"/>
</dbReference>
<dbReference type="SUPFAM" id="SSF55961">
    <property type="entry name" value="Bet v1-like"/>
    <property type="match status" value="1"/>
</dbReference>
<dbReference type="SUPFAM" id="SSF48350">
    <property type="entry name" value="GTPase activation domain, GAP"/>
    <property type="match status" value="1"/>
</dbReference>
<dbReference type="SUPFAM" id="SSF47769">
    <property type="entry name" value="SAM/Pointed domain"/>
    <property type="match status" value="1"/>
</dbReference>
<dbReference type="PROSITE" id="PS50238">
    <property type="entry name" value="RHOGAP"/>
    <property type="match status" value="1"/>
</dbReference>
<dbReference type="PROSITE" id="PS50848">
    <property type="entry name" value="START"/>
    <property type="match status" value="1"/>
</dbReference>
<gene>
    <name type="primary">Dlc1</name>
    <name type="synonym">Arhgap7</name>
    <name type="synonym">Stard12</name>
</gene>
<proteinExistence type="evidence at protein level"/>
<keyword id="KW-0025">Alternative splicing</keyword>
<keyword id="KW-0965">Cell junction</keyword>
<keyword id="KW-0963">Cytoplasm</keyword>
<keyword id="KW-0343">GTPase activation</keyword>
<keyword id="KW-0472">Membrane</keyword>
<keyword id="KW-0597">Phosphoprotein</keyword>
<keyword id="KW-1185">Reference proteome</keyword>
<keyword id="KW-0043">Tumor suppressor</keyword>
<organism>
    <name type="scientific">Mus musculus</name>
    <name type="common">Mouse</name>
    <dbReference type="NCBI Taxonomy" id="10090"/>
    <lineage>
        <taxon>Eukaryota</taxon>
        <taxon>Metazoa</taxon>
        <taxon>Chordata</taxon>
        <taxon>Craniata</taxon>
        <taxon>Vertebrata</taxon>
        <taxon>Euteleostomi</taxon>
        <taxon>Mammalia</taxon>
        <taxon>Eutheria</taxon>
        <taxon>Euarchontoglires</taxon>
        <taxon>Glires</taxon>
        <taxon>Rodentia</taxon>
        <taxon>Myomorpha</taxon>
        <taxon>Muroidea</taxon>
        <taxon>Muridae</taxon>
        <taxon>Murinae</taxon>
        <taxon>Mus</taxon>
        <taxon>Mus</taxon>
    </lineage>
</organism>
<sequence length="1092" mass="123367">MCRDEPDTMILTQIEAKEACDWLRVTGFPQYAQLYEDLLFPVDIALVKREHDFLDRDAIEALCRRLNTLNKCAVMKLEISPHRKRSEDSDEDEPCAISGKWTFQRDSKRWSRLEEFDVFFPKQDPIPGSPDNSRLQSATSHESMLTDLSEHQEVASVRSLSSTSSSVPTHAAHSGDATTPRTNSVISVCSSGHFVGNDDSFSSLPSPKELSSFSFSMKGHHEKNTKSKTRSLLKRMESLKLKGSHHSKHKAPSKLGLIISAPILQEGMDEAKLKQLNCVEISALNGNHINVPMVRKRSVSNSTQTSSSSSQSETSSAVSTPSPVTRTRSLSTCNKRVGMYLEGFDPFSQSTLNNVTEQNYKNRESYPEDTVFYIPEDHKPGTFPKALSHGSFCPSGNSSVNWRTGSFHGPGHLSLRRENSHDSPKELKRRNSSSSLSSRLSIYDNVPGSILYSSSGELADLENEDIFPELDDILYHVKGMQRIVNQWSEKFSDEGDSDSALDSVSPCPSSPKQIHLDVDHDRRTPSDLDSTGNSLNEPEEPTDIPERRDSGVGASLTRCNRHRLRWHSFQSSHRPSLNSVSLQINCQSVAQMNLLQKYSLLKLTALLEKYTPSNKHGFSWAVPKFMKRIKVPDYKDRSVFGVPLTVNVQRSGQPLPQSIQQAMRYLRNHCLDQVGLFRKSGVKSRIQALRQMNESAEDNVNYEGQSAYDVADMLKQYFRDLPEPLMTNKLSETFLQIYQYVPKDQRLQAIKAAIMLLPDENREVLQTLLYFLSDVTAAVKENQMTPTNLAVCLAPSLFHLNTLKRENSSPRVMQRKQSLGKPDQKDLNENLAATQGLAHMIAECKKLFQVPEEMSRCRNSYTEQELKPLTLEALGHLNSDQPADYRHFLQDCVDGLFKEVKEKFKGWVSYPTSEQADLSYKKVSEGPPLRLWRSTIEVPAAPEEILKRLLKEQHLWDVDLLDSKVIEILDSQTEIYQYVQNSMAPHPARDYVVLRTWRTNLPRGACALLLTSVDHDRAPVAGVRVNVLLSRYLIEPCGSGKSKLTYMCRADLRGHMPEWYSKSFGHLCAAEVVKIRDSFSNQNTESKDTRSR</sequence>
<evidence type="ECO:0000250" key="1"/>
<evidence type="ECO:0000250" key="2">
    <source>
        <dbReference type="UniProtKB" id="Q63744"/>
    </source>
</evidence>
<evidence type="ECO:0000250" key="3">
    <source>
        <dbReference type="UniProtKB" id="Q96QB1"/>
    </source>
</evidence>
<evidence type="ECO:0000255" key="4">
    <source>
        <dbReference type="PROSITE-ProRule" id="PRU00172"/>
    </source>
</evidence>
<evidence type="ECO:0000255" key="5">
    <source>
        <dbReference type="PROSITE-ProRule" id="PRU00197"/>
    </source>
</evidence>
<evidence type="ECO:0000256" key="6">
    <source>
        <dbReference type="SAM" id="MobiDB-lite"/>
    </source>
</evidence>
<evidence type="ECO:0000303" key="7">
    <source>
    </source>
</evidence>
<evidence type="ECO:0000305" key="8"/>
<evidence type="ECO:0007744" key="9">
    <source>
    </source>
</evidence>
<evidence type="ECO:0007744" key="10">
    <source>
    </source>
</evidence>